<protein>
    <recommendedName>
        <fullName evidence="7">Alpha-conotoxin-like Mi20.1</fullName>
    </recommendedName>
    <alternativeName>
        <fullName>Alpha-D-conotoxin MlXXA</fullName>
    </alternativeName>
    <alternativeName>
        <fullName evidence="6">Alpha-conotoxin-like Ml20.1</fullName>
    </alternativeName>
</protein>
<sequence>MPKLEMMLLVLLILPLSSFSAAGEQVVQGDRRSDGLARYLQRGGRDVQECQVVTPGSKWGRCCLNRVCGPMCCPASHCYCIYHRGKGHGCSC</sequence>
<name>CXAT1_CONMI</name>
<evidence type="ECO:0000250" key="1">
    <source>
        <dbReference type="UniProtKB" id="A0A0A0VBX4"/>
    </source>
</evidence>
<evidence type="ECO:0000250" key="2">
    <source>
        <dbReference type="UniProtKB" id="C3VVN5"/>
    </source>
</evidence>
<evidence type="ECO:0000250" key="3">
    <source>
        <dbReference type="UniProtKB" id="P0C1W6"/>
    </source>
</evidence>
<evidence type="ECO:0000255" key="4"/>
<evidence type="ECO:0000269" key="5">
    <source>
    </source>
</evidence>
<evidence type="ECO:0000303" key="6">
    <source>
    </source>
</evidence>
<evidence type="ECO:0000305" key="7"/>
<evidence type="ECO:0000305" key="8">
    <source>
    </source>
</evidence>
<organism>
    <name type="scientific">Conus miles</name>
    <name type="common">Soldier cone</name>
    <name type="synonym">Mile cone</name>
    <dbReference type="NCBI Taxonomy" id="69564"/>
    <lineage>
        <taxon>Eukaryota</taxon>
        <taxon>Metazoa</taxon>
        <taxon>Spiralia</taxon>
        <taxon>Lophotrochozoa</taxon>
        <taxon>Mollusca</taxon>
        <taxon>Gastropoda</taxon>
        <taxon>Caenogastropoda</taxon>
        <taxon>Neogastropoda</taxon>
        <taxon>Conoidea</taxon>
        <taxon>Conidae</taxon>
        <taxon>Conus</taxon>
        <taxon>Rhizoconus</taxon>
    </lineage>
</organism>
<reference key="1">
    <citation type="journal article" date="2009" name="Biochemistry">
        <title>Novel alpha D-conopeptides and their precursors identified by cDNA cloning define the D-conotoxin superfamily.</title>
        <authorList>
            <person name="Loughnan M.L."/>
            <person name="Nicke A."/>
            <person name="Lawrence N."/>
            <person name="Lewis R.J."/>
        </authorList>
    </citation>
    <scope>NUCLEOTIDE SEQUENCE [MRNA]</scope>
    <scope>PROTEIN SEQUENCE OF 46-69</scope>
    <scope>GAMMA-CARBOXYGLUTAMATION AT GLU-49</scope>
    <scope>HYDROXYLATION AT PRO-55</scope>
    <scope>IDENTIFICATION BY MASS SPECTROMETRY</scope>
    <scope>SUBCELLULAR LOCATION</scope>
    <source>
        <tissue>Venom</tissue>
        <tissue>Venom duct</tissue>
    </source>
</reference>
<comment type="function">
    <text evidence="3">Alpha-conotoxins act on postsynaptic membranes, they bind to the nicotinic acetylcholine receptors (nAChR) and thus inhibit them. Through its two C-terminal domains, this homodimeric protein would bind to two nAChR allosteric sites, located outside the nAChR C-loop of the principal binding face and at the adjacent binding interface in a clockwise direction. This toxin specifically blocks mammalian neuronal nAChR of the alpha-7/CHRNA7, alpha-3-beta-2/CHRNA3-CHRNB2 and alpha-4-beta-2/CHRNA4-CHRNB2 subtypes.</text>
</comment>
<comment type="subunit">
    <text evidence="2">Hetero-, homo- or pseudo-homodimer (identical sequence, different post-translational modifications) (By similarity). One pseudo-homodimer of [carboxyGlu-49, hydroxyPro-55]Ml20.1 and [carboxyGlu-49, hydroxyPro-55, hydroxyPro-70]Ml20.1 may exist.</text>
</comment>
<comment type="subcellular location">
    <subcellularLocation>
        <location evidence="5">Secreted</location>
    </subcellularLocation>
</comment>
<comment type="tissue specificity">
    <text evidence="8">Expressed by the venom duct.</text>
</comment>
<comment type="domain">
    <text evidence="7">The cysteine framework is XX (C-CC-C-CC-C-C-C-C).</text>
</comment>
<comment type="domain">
    <text evidence="3">Displays a mini-granulin fold, a structure composed of two short, stacked beta-hairpins connected by two parallel disulfide bonds. This newly described fold is derived from the same cysteine connectivity as knottins (ICK fold). The name 'mini-granulin fold' comes from the structural homology with the N-terminal region of the human granulin.</text>
</comment>
<comment type="similarity">
    <text evidence="7">Belongs to the conotoxin D superfamily.</text>
</comment>
<feature type="signal peptide" evidence="4">
    <location>
        <begin position="1"/>
        <end position="24"/>
    </location>
</feature>
<feature type="propeptide" id="PRO_5000467222" evidence="5">
    <location>
        <begin position="25"/>
        <end position="45"/>
    </location>
</feature>
<feature type="chain" id="PRO_5000467223" description="Alpha-conotoxin-like Mi20.1">
    <location>
        <begin position="46"/>
        <end position="92"/>
    </location>
</feature>
<feature type="modified residue" description="4-carboxyglutamate" evidence="5">
    <location>
        <position position="49"/>
    </location>
</feature>
<feature type="modified residue" description="4-hydroxyproline" evidence="5">
    <location>
        <position position="55"/>
    </location>
</feature>
<feature type="disulfide bond" description="Interchain (with C-63)" evidence="1">
    <location>
        <position position="50"/>
    </location>
</feature>
<feature type="disulfide bond" description="Interchain (with C-51)" evidence="1">
    <location>
        <position position="62"/>
    </location>
</feature>
<feature type="disulfide bond" evidence="1">
    <location>
        <begin position="63"/>
        <end position="72"/>
    </location>
</feature>
<feature type="disulfide bond" evidence="1">
    <location>
        <begin position="68"/>
        <end position="80"/>
    </location>
</feature>
<feature type="disulfide bond" evidence="1">
    <location>
        <begin position="73"/>
        <end position="90"/>
    </location>
</feature>
<feature type="disulfide bond" evidence="1">
    <location>
        <begin position="78"/>
        <end position="92"/>
    </location>
</feature>
<keyword id="KW-0008">Acetylcholine receptor inhibiting toxin</keyword>
<keyword id="KW-0903">Direct protein sequencing</keyword>
<keyword id="KW-1015">Disulfide bond</keyword>
<keyword id="KW-0301">Gamma-carboxyglutamic acid</keyword>
<keyword id="KW-0379">Hydroxylation</keyword>
<keyword id="KW-0872">Ion channel impairing toxin</keyword>
<keyword id="KW-0528">Neurotoxin</keyword>
<keyword id="KW-0629">Postsynaptic neurotoxin</keyword>
<keyword id="KW-0964">Secreted</keyword>
<keyword id="KW-0732">Signal</keyword>
<keyword id="KW-0800">Toxin</keyword>
<accession>C4PWC4</accession>
<dbReference type="EMBL" id="FN178636">
    <property type="protein sequence ID" value="CAX51122.1"/>
    <property type="molecule type" value="mRNA"/>
</dbReference>
<dbReference type="SMR" id="C4PWC4"/>
<dbReference type="ConoServer" id="3606">
    <property type="toxin name" value="Mi20.1 precursor"/>
</dbReference>
<dbReference type="GO" id="GO:0005576">
    <property type="term" value="C:extracellular region"/>
    <property type="evidence" value="ECO:0007669"/>
    <property type="project" value="UniProtKB-SubCell"/>
</dbReference>
<dbReference type="GO" id="GO:0035792">
    <property type="term" value="C:host cell postsynaptic membrane"/>
    <property type="evidence" value="ECO:0007669"/>
    <property type="project" value="UniProtKB-KW"/>
</dbReference>
<dbReference type="GO" id="GO:0030550">
    <property type="term" value="F:acetylcholine receptor inhibitor activity"/>
    <property type="evidence" value="ECO:0007669"/>
    <property type="project" value="UniProtKB-KW"/>
</dbReference>
<dbReference type="GO" id="GO:0099106">
    <property type="term" value="F:ion channel regulator activity"/>
    <property type="evidence" value="ECO:0007669"/>
    <property type="project" value="UniProtKB-KW"/>
</dbReference>
<dbReference type="GO" id="GO:0090729">
    <property type="term" value="F:toxin activity"/>
    <property type="evidence" value="ECO:0007669"/>
    <property type="project" value="UniProtKB-KW"/>
</dbReference>
<proteinExistence type="evidence at protein level"/>